<name>PEPO_LACLC</name>
<keyword id="KW-0963">Cytoplasm</keyword>
<keyword id="KW-0903">Direct protein sequencing</keyword>
<keyword id="KW-0378">Hydrolase</keyword>
<keyword id="KW-0479">Metal-binding</keyword>
<keyword id="KW-0482">Metalloprotease</keyword>
<keyword id="KW-0645">Protease</keyword>
<keyword id="KW-0862">Zinc</keyword>
<feature type="initiator methionine" description="Removed" evidence="4">
    <location>
        <position position="1"/>
    </location>
</feature>
<feature type="chain" id="PRO_0000078231" description="Neutral endopeptidase">
    <location>
        <begin position="2"/>
        <end position="627"/>
    </location>
</feature>
<feature type="domain" description="Peptidase M13" evidence="2">
    <location>
        <begin position="1"/>
        <end position="627"/>
    </location>
</feature>
<feature type="active site" evidence="2 3">
    <location>
        <position position="476"/>
    </location>
</feature>
<feature type="active site" description="Proton donor" evidence="2">
    <location>
        <position position="539"/>
    </location>
</feature>
<feature type="binding site" evidence="2 3">
    <location>
        <position position="475"/>
    </location>
    <ligand>
        <name>Zn(2+)</name>
        <dbReference type="ChEBI" id="CHEBI:29105"/>
        <note>catalytic</note>
    </ligand>
</feature>
<feature type="binding site" evidence="2 3">
    <location>
        <position position="479"/>
    </location>
    <ligand>
        <name>Zn(2+)</name>
        <dbReference type="ChEBI" id="CHEBI:29105"/>
        <note>catalytic</note>
    </ligand>
</feature>
<feature type="binding site" evidence="2">
    <location>
        <position position="535"/>
    </location>
    <ligand>
        <name>Zn(2+)</name>
        <dbReference type="ChEBI" id="CHEBI:29105"/>
        <note>catalytic</note>
    </ligand>
</feature>
<organism>
    <name type="scientific">Lactococcus lactis subsp. cremoris</name>
    <name type="common">Streptococcus cremoris</name>
    <dbReference type="NCBI Taxonomy" id="1359"/>
    <lineage>
        <taxon>Bacteria</taxon>
        <taxon>Bacillati</taxon>
        <taxon>Bacillota</taxon>
        <taxon>Bacilli</taxon>
        <taxon>Lactobacillales</taxon>
        <taxon>Streptococcaceae</taxon>
        <taxon>Lactococcus</taxon>
    </lineage>
</organism>
<sequence length="627" mass="71528">MTRIQDDLFATVNAEWLENAEIPADKPRISAFDELVLKNEKNLAKDLADLSQNLPTDNPELLEAIKFYNKAGDWQAREKADFSAVKNELAKVETLNTFEDFKNNLTQLVFHSQAPLPFSFSVEPDMKDAIHYSLGFSGPGLILPDTTYYNDEHPRKKELLDFWAKNTSEILKTFDVENAEEIAKSALKFDALLVPSANTSEEWAKYAELYHPISTDSFVSKVKNLDLKSLIKDLVKTEPDKVIVYEDRFYESFDSLINEENWSLIKAWMLTKIARGATSFFNEDLRILGGAYGRFLSNVQEARSQEKHQLDLTESYFSQVIGLFYGKKYFGEAGKADVKRMVTAMIKVYQARLSKNEWLSQETAEKAIEKLDAITPFIGFPDKLPEIYSRLKTTSGSLYEDALKFDEILTARTFEKFSEDVDKTSWHMPAHMVNAYYSPDSNTIVFPAAILQAPFYSLEQSSSQNYGGIGTVIAHEISHAFDNNGAQFDKEGNLNKWWLDEDYEAFEEKQKEMIALFDGVETEAGPANGKLIVSENIADQGGITAALTAAKDEKDVDLKAFFSQWAKIWRMKASKEFQQMLLSMDFHAPAKLRANIPPTNLEEFYDTFDVKETDKMYRAPENRLKIW</sequence>
<accession>P0C2B4</accession>
<accession>Q09145</accession>
<accession>Q9R4Y4</accession>
<evidence type="ECO:0000250" key="1"/>
<evidence type="ECO:0000255" key="2">
    <source>
        <dbReference type="PROSITE-ProRule" id="PRU01233"/>
    </source>
</evidence>
<evidence type="ECO:0000255" key="3">
    <source>
        <dbReference type="PROSITE-ProRule" id="PRU10095"/>
    </source>
</evidence>
<evidence type="ECO:0000269" key="4">
    <source>
    </source>
</evidence>
<evidence type="ECO:0000305" key="5"/>
<proteinExistence type="evidence at protein level"/>
<reference key="1">
    <citation type="journal article" date="1993" name="J. Bacteriol.">
        <title>Cloning and sequencing of the gene for a lactococcal endopeptidase, an enzyme with sequence similarity to mammalian enkephalinase.</title>
        <authorList>
            <person name="Mierau I."/>
            <person name="Tan P.S.T."/>
            <person name="Haandrikman A.J."/>
            <person name="Kok J."/>
            <person name="Leenhouts K.J."/>
            <person name="Konings W.N."/>
            <person name="Venema G."/>
        </authorList>
    </citation>
    <scope>NUCLEOTIDE SEQUENCE [GENOMIC DNA]</scope>
    <scope>PROTEIN SEQUENCE OF 2-21</scope>
    <source>
        <strain>P8-2-47</strain>
    </source>
</reference>
<comment type="function">
    <text evidence="1">Endopeptidase with broad substrate specificity for several oligopeptides.</text>
</comment>
<comment type="cofactor">
    <cofactor evidence="1">
        <name>Zn(2+)</name>
        <dbReference type="ChEBI" id="CHEBI:29105"/>
    </cofactor>
    <text evidence="1">Binds 1 zinc ion per subunit.</text>
</comment>
<comment type="subunit">
    <text evidence="1">Monomer.</text>
</comment>
<comment type="subcellular location">
    <subcellularLocation>
        <location evidence="1">Cytoplasm</location>
    </subcellularLocation>
</comment>
<comment type="similarity">
    <text evidence="2 5">Belongs to the peptidase M13 family.</text>
</comment>
<gene>
    <name type="primary">pepO</name>
</gene>
<dbReference type="EC" id="3.4.24.-"/>
<dbReference type="EMBL" id="L04938">
    <property type="protein sequence ID" value="AAA25204.1"/>
    <property type="molecule type" value="Genomic_DNA"/>
</dbReference>
<dbReference type="PIR" id="A47098">
    <property type="entry name" value="A47098"/>
</dbReference>
<dbReference type="RefSeq" id="WP_011669109.1">
    <property type="nucleotide sequence ID" value="NZ_WJUX01000060.1"/>
</dbReference>
<dbReference type="RefSeq" id="YP_005863095.1">
    <property type="nucleotide sequence ID" value="NC_017478.1"/>
</dbReference>
<dbReference type="SMR" id="P0C2B4"/>
<dbReference type="MEROPS" id="M13.004"/>
<dbReference type="GO" id="GO:0005737">
    <property type="term" value="C:cytoplasm"/>
    <property type="evidence" value="ECO:0007669"/>
    <property type="project" value="UniProtKB-SubCell"/>
</dbReference>
<dbReference type="GO" id="GO:0005886">
    <property type="term" value="C:plasma membrane"/>
    <property type="evidence" value="ECO:0007669"/>
    <property type="project" value="TreeGrafter"/>
</dbReference>
<dbReference type="GO" id="GO:0046872">
    <property type="term" value="F:metal ion binding"/>
    <property type="evidence" value="ECO:0007669"/>
    <property type="project" value="UniProtKB-KW"/>
</dbReference>
<dbReference type="GO" id="GO:0004222">
    <property type="term" value="F:metalloendopeptidase activity"/>
    <property type="evidence" value="ECO:0007669"/>
    <property type="project" value="InterPro"/>
</dbReference>
<dbReference type="GO" id="GO:0016485">
    <property type="term" value="P:protein processing"/>
    <property type="evidence" value="ECO:0007669"/>
    <property type="project" value="TreeGrafter"/>
</dbReference>
<dbReference type="CDD" id="cd08662">
    <property type="entry name" value="M13"/>
    <property type="match status" value="1"/>
</dbReference>
<dbReference type="Gene3D" id="3.40.390.10">
    <property type="entry name" value="Collagenase (Catalytic Domain)"/>
    <property type="match status" value="1"/>
</dbReference>
<dbReference type="Gene3D" id="1.10.1380.10">
    <property type="entry name" value="Neutral endopeptidase , domain2"/>
    <property type="match status" value="1"/>
</dbReference>
<dbReference type="InterPro" id="IPR024079">
    <property type="entry name" value="MetalloPept_cat_dom_sf"/>
</dbReference>
<dbReference type="InterPro" id="IPR000718">
    <property type="entry name" value="Peptidase_M13"/>
</dbReference>
<dbReference type="InterPro" id="IPR018497">
    <property type="entry name" value="Peptidase_M13_C"/>
</dbReference>
<dbReference type="InterPro" id="IPR042089">
    <property type="entry name" value="Peptidase_M13_dom_2"/>
</dbReference>
<dbReference type="InterPro" id="IPR008753">
    <property type="entry name" value="Peptidase_M13_N"/>
</dbReference>
<dbReference type="PANTHER" id="PTHR11733:SF167">
    <property type="entry name" value="FI17812P1-RELATED"/>
    <property type="match status" value="1"/>
</dbReference>
<dbReference type="PANTHER" id="PTHR11733">
    <property type="entry name" value="ZINC METALLOPROTEASE FAMILY M13 NEPRILYSIN-RELATED"/>
    <property type="match status" value="1"/>
</dbReference>
<dbReference type="Pfam" id="PF01431">
    <property type="entry name" value="Peptidase_M13"/>
    <property type="match status" value="1"/>
</dbReference>
<dbReference type="Pfam" id="PF05649">
    <property type="entry name" value="Peptidase_M13_N"/>
    <property type="match status" value="1"/>
</dbReference>
<dbReference type="PRINTS" id="PR00786">
    <property type="entry name" value="NEPRILYSIN"/>
</dbReference>
<dbReference type="SUPFAM" id="SSF55486">
    <property type="entry name" value="Metalloproteases ('zincins'), catalytic domain"/>
    <property type="match status" value="1"/>
</dbReference>
<dbReference type="PROSITE" id="PS51885">
    <property type="entry name" value="NEPRILYSIN"/>
    <property type="match status" value="1"/>
</dbReference>
<dbReference type="PROSITE" id="PS00142">
    <property type="entry name" value="ZINC_PROTEASE"/>
    <property type="match status" value="1"/>
</dbReference>
<protein>
    <recommendedName>
        <fullName>Neutral endopeptidase</fullName>
        <ecNumber>3.4.24.-</ecNumber>
    </recommendedName>
    <alternativeName>
        <fullName>Endopeptidase O</fullName>
    </alternativeName>
</protein>